<protein>
    <recommendedName>
        <fullName>Platelet-derived growth factor receptor beta</fullName>
        <shortName>PDGF-R-beta</shortName>
        <shortName>PDGFR-beta</shortName>
        <ecNumber>2.7.10.1</ecNumber>
    </recommendedName>
    <alternativeName>
        <fullName>Beta platelet-derived growth factor receptor</fullName>
    </alternativeName>
    <alternativeName>
        <fullName>Beta-type platelet-derived growth factor receptor</fullName>
    </alternativeName>
</protein>
<comment type="function">
    <text evidence="1">Tyrosine-protein kinase that acts as a cell-surface receptor for homodimeric PDGFB and PDGFD and for heterodimers formed by PDGFA and PDGFB, and plays an essential role in the regulation of embryonic development, cell proliferation, survival, differentiation, chemotaxis and migration. Plays an essential role in blood vessel development by promoting proliferation, migration and recruitment of pericytes and smooth muscle cells to endothelial cells. Required for normal development of the cardiovascular system. Required for normal recruitment of pericytes (mesangial cells) in the kidney glomerulus, and for normal formation of a branched network of capillaries in kidney glomeruli. Promotes rearrangement of the actin cytoskeleton and the formation of membrane ruffles. Binding of its cognate ligands - homodimeric PDGFB, heterodimers formed by PDGFA and PDGFB or homodimeric PDGFD -leads to the activation of several signaling cascades; the response depends on the nature of the bound ligand and is modulated by the formation of heterodimers between PDGFRA and PDGFRB. Receptor signaling is down-regulated by protein phosphatases that dephosphorylate the receptor and its down-stream effectors, and by rapid internalization of the activated receptor (By similarity).</text>
</comment>
<comment type="catalytic activity">
    <reaction evidence="5">
        <text>L-tyrosyl-[protein] + ATP = O-phospho-L-tyrosyl-[protein] + ADP + H(+)</text>
        <dbReference type="Rhea" id="RHEA:10596"/>
        <dbReference type="Rhea" id="RHEA-COMP:10136"/>
        <dbReference type="Rhea" id="RHEA-COMP:20101"/>
        <dbReference type="ChEBI" id="CHEBI:15378"/>
        <dbReference type="ChEBI" id="CHEBI:30616"/>
        <dbReference type="ChEBI" id="CHEBI:46858"/>
        <dbReference type="ChEBI" id="CHEBI:61978"/>
        <dbReference type="ChEBI" id="CHEBI:456216"/>
        <dbReference type="EC" id="2.7.10.1"/>
    </reaction>
</comment>
<comment type="activity regulation">
    <text evidence="1">Present in an inactive conformation in the absence of bound ligand. Binding of PDGFB and/or PDGFD leads to dimerization and activation by autophosphorylation on tyrosine residues (By similarity).</text>
</comment>
<comment type="subunit">
    <text evidence="1">Interacts with homodimeric PDGFB and PDGFD, and with heterodimers formed by PDGFA and PDGFB. Monomer in the absence of bound ligand. Interaction with homodimeric PDGFB, heterodimers formed by PDGFA and PDGFB or homodimeric PDGFD, leads to receptor dimerization, where both PDGFRA homodimers and heterodimers with PDGFRB are observed (By similarity).</text>
</comment>
<comment type="subcellular location">
    <subcellularLocation>
        <location evidence="1">Cell membrane</location>
        <topology evidence="1">Single-pass type I membrane protein</topology>
    </subcellularLocation>
    <subcellularLocation>
        <location evidence="1">Cytoplasmic vesicle</location>
    </subcellularLocation>
    <subcellularLocation>
        <location evidence="1">Lysosome lumen</location>
    </subcellularLocation>
    <text evidence="1">After ligand binding, the autophosphorylated receptor is ubiquitinated and internalized, leading to its degradation.</text>
</comment>
<comment type="PTM">
    <text evidence="1">Ubiquitinated. After autophosphorylation, the receptor is polyubiquitinated, leading to its degradation (By similarity).</text>
</comment>
<comment type="PTM">
    <text evidence="1">Autophosphorylated on tyrosine residues upon ligand binding. Autophosphorylation occurs in trans, i.e. one subunit of the dimeric receptor phosphorylates tyrosine residues on the other subunit (By similarity).</text>
</comment>
<comment type="similarity">
    <text evidence="4">Belongs to the protein kinase superfamily. Tyr protein kinase family. CSF-1/PDGF receptor subfamily.</text>
</comment>
<feature type="signal peptide" evidence="2">
    <location>
        <begin position="1"/>
        <end position="30"/>
    </location>
</feature>
<feature type="chain" id="PRO_0000248882" description="Platelet-derived growth factor receptor beta">
    <location>
        <begin position="31"/>
        <end position="1048"/>
    </location>
</feature>
<feature type="topological domain" description="Extracellular" evidence="2">
    <location>
        <begin position="31"/>
        <end position="528"/>
    </location>
</feature>
<feature type="transmembrane region" description="Helical" evidence="2">
    <location>
        <begin position="529"/>
        <end position="549"/>
    </location>
</feature>
<feature type="topological domain" description="Cytoplasmic" evidence="2">
    <location>
        <begin position="550"/>
        <end position="1048"/>
    </location>
</feature>
<feature type="domain" description="Ig-like C2-type 1">
    <location>
        <begin position="35"/>
        <end position="124"/>
    </location>
</feature>
<feature type="domain" description="Ig-like C2-type 2">
    <location>
        <begin position="216"/>
        <end position="309"/>
    </location>
</feature>
<feature type="domain" description="Ig-like C2-type 3">
    <location>
        <begin position="319"/>
        <end position="406"/>
    </location>
</feature>
<feature type="domain" description="Protein kinase" evidence="4">
    <location>
        <begin position="596"/>
        <end position="957"/>
    </location>
</feature>
<feature type="active site" description="Proton acceptor" evidence="4 5">
    <location>
        <position position="821"/>
    </location>
</feature>
<feature type="binding site" evidence="4">
    <location>
        <begin position="602"/>
        <end position="610"/>
    </location>
    <ligand>
        <name>ATP</name>
        <dbReference type="ChEBI" id="CHEBI:30616"/>
    </ligand>
</feature>
<feature type="binding site" evidence="4">
    <location>
        <position position="630"/>
    </location>
    <ligand>
        <name>ATP</name>
        <dbReference type="ChEBI" id="CHEBI:30616"/>
    </ligand>
</feature>
<feature type="modified residue" description="Phosphotyrosine; by autocatalysis" evidence="1">
    <location>
        <position position="558"/>
    </location>
</feature>
<feature type="modified residue" description="Phosphotyrosine; by autocatalysis" evidence="1">
    <location>
        <position position="575"/>
    </location>
</feature>
<feature type="modified residue" description="Phosphotyrosine; by autocatalysis" evidence="1">
    <location>
        <position position="577"/>
    </location>
</feature>
<feature type="modified residue" description="Phosphotyrosine; by autocatalysis" evidence="1">
    <location>
        <position position="735"/>
    </location>
</feature>
<feature type="modified residue" description="Phosphotyrosine; by autocatalysis" evidence="1">
    <location>
        <position position="746"/>
    </location>
</feature>
<feature type="modified residue" description="Phosphotyrosine; by autocatalysis" evidence="1">
    <location>
        <position position="758"/>
    </location>
</feature>
<feature type="modified residue" description="Phosphotyrosine; by autocatalysis" evidence="1">
    <location>
        <position position="766"/>
    </location>
</feature>
<feature type="modified residue" description="Phosphotyrosine; by autocatalysis" evidence="1">
    <location>
        <position position="770"/>
    </location>
</feature>
<feature type="modified residue" description="Phosphotyrosine; by autocatalysis" evidence="1">
    <location>
        <position position="852"/>
    </location>
</feature>
<feature type="modified residue" description="Phosphotyrosine; by autocatalysis" evidence="1">
    <location>
        <position position="1036"/>
    </location>
</feature>
<feature type="glycosylation site" description="N-linked (GlcNAc...) asparagine" evidence="2">
    <location>
        <position position="87"/>
    </location>
</feature>
<feature type="glycosylation site" description="N-linked (GlcNAc...) asparagine" evidence="2">
    <location>
        <position position="159"/>
    </location>
</feature>
<feature type="glycosylation site" description="N-linked (GlcNAc...) asparagine" evidence="2">
    <location>
        <position position="224"/>
    </location>
</feature>
<feature type="glycosylation site" description="N-linked (GlcNAc...) asparagine" evidence="2">
    <location>
        <position position="239"/>
    </location>
</feature>
<feature type="glycosylation site" description="N-linked (GlcNAc...) asparagine" evidence="2">
    <location>
        <position position="309"/>
    </location>
</feature>
<feature type="glycosylation site" description="N-linked (GlcNAc...) asparagine" evidence="2">
    <location>
        <position position="327"/>
    </location>
</feature>
<feature type="glycosylation site" description="N-linked (GlcNAc...) asparagine" evidence="2">
    <location>
        <position position="457"/>
    </location>
</feature>
<feature type="disulfide bond" evidence="3">
    <location>
        <begin position="52"/>
        <end position="108"/>
    </location>
</feature>
<feature type="disulfide bond" evidence="3">
    <location>
        <begin position="153"/>
        <end position="194"/>
    </location>
</feature>
<feature type="disulfide bond" evidence="3">
    <location>
        <begin position="240"/>
        <end position="293"/>
    </location>
</feature>
<feature type="disulfide bond" evidence="3">
    <location>
        <begin position="434"/>
        <end position="503"/>
    </location>
</feature>
<dbReference type="EC" id="2.7.10.1"/>
<dbReference type="EMBL" id="U63926">
    <property type="protein sequence ID" value="AAC60062.1"/>
    <property type="molecule type" value="Genomic_DNA"/>
</dbReference>
<dbReference type="PIR" id="T30815">
    <property type="entry name" value="T30815"/>
</dbReference>
<dbReference type="SMR" id="P79749"/>
<dbReference type="STRING" id="31033.ENSTRUP00000018654"/>
<dbReference type="GlyCosmos" id="P79749">
    <property type="glycosylation" value="7 sites, No reported glycans"/>
</dbReference>
<dbReference type="eggNOG" id="KOG0200">
    <property type="taxonomic scope" value="Eukaryota"/>
</dbReference>
<dbReference type="InParanoid" id="P79749"/>
<dbReference type="Proteomes" id="UP000005226">
    <property type="component" value="Unplaced"/>
</dbReference>
<dbReference type="GO" id="GO:0031410">
    <property type="term" value="C:cytoplasmic vesicle"/>
    <property type="evidence" value="ECO:0007669"/>
    <property type="project" value="UniProtKB-KW"/>
</dbReference>
<dbReference type="GO" id="GO:0043202">
    <property type="term" value="C:lysosomal lumen"/>
    <property type="evidence" value="ECO:0007669"/>
    <property type="project" value="UniProtKB-SubCell"/>
</dbReference>
<dbReference type="GO" id="GO:0005886">
    <property type="term" value="C:plasma membrane"/>
    <property type="evidence" value="ECO:0007669"/>
    <property type="project" value="UniProtKB-SubCell"/>
</dbReference>
<dbReference type="GO" id="GO:0043235">
    <property type="term" value="C:receptor complex"/>
    <property type="evidence" value="ECO:0007669"/>
    <property type="project" value="TreeGrafter"/>
</dbReference>
<dbReference type="GO" id="GO:0005524">
    <property type="term" value="F:ATP binding"/>
    <property type="evidence" value="ECO:0007669"/>
    <property type="project" value="UniProtKB-KW"/>
</dbReference>
<dbReference type="GO" id="GO:0005019">
    <property type="term" value="F:platelet-derived growth factor beta-receptor activity"/>
    <property type="evidence" value="ECO:0007669"/>
    <property type="project" value="InterPro"/>
</dbReference>
<dbReference type="GO" id="GO:0048407">
    <property type="term" value="F:platelet-derived growth factor binding"/>
    <property type="evidence" value="ECO:0007669"/>
    <property type="project" value="TreeGrafter"/>
</dbReference>
<dbReference type="GO" id="GO:0001525">
    <property type="term" value="P:angiogenesis"/>
    <property type="evidence" value="ECO:0007669"/>
    <property type="project" value="TreeGrafter"/>
</dbReference>
<dbReference type="GO" id="GO:0060326">
    <property type="term" value="P:cell chemotaxis"/>
    <property type="evidence" value="ECO:0007669"/>
    <property type="project" value="TreeGrafter"/>
</dbReference>
<dbReference type="GO" id="GO:0014911">
    <property type="term" value="P:positive regulation of smooth muscle cell migration"/>
    <property type="evidence" value="ECO:0007669"/>
    <property type="project" value="TreeGrafter"/>
</dbReference>
<dbReference type="FunFam" id="3.30.200.20:FF:000025">
    <property type="entry name" value="Platelet-derived growth factor receptor alpha"/>
    <property type="match status" value="1"/>
</dbReference>
<dbReference type="FunFam" id="1.10.510.10:FF:000140">
    <property type="entry name" value="Platelet-derived growth factor receptor beta"/>
    <property type="match status" value="1"/>
</dbReference>
<dbReference type="Gene3D" id="2.60.40.10">
    <property type="entry name" value="Immunoglobulins"/>
    <property type="match status" value="5"/>
</dbReference>
<dbReference type="Gene3D" id="3.30.200.20">
    <property type="entry name" value="Phosphorylase Kinase, domain 1"/>
    <property type="match status" value="1"/>
</dbReference>
<dbReference type="Gene3D" id="1.10.510.10">
    <property type="entry name" value="Transferase(Phosphotransferase) domain 1"/>
    <property type="match status" value="1"/>
</dbReference>
<dbReference type="InterPro" id="IPR007110">
    <property type="entry name" value="Ig-like_dom"/>
</dbReference>
<dbReference type="InterPro" id="IPR036179">
    <property type="entry name" value="Ig-like_dom_sf"/>
</dbReference>
<dbReference type="InterPro" id="IPR013783">
    <property type="entry name" value="Ig-like_fold"/>
</dbReference>
<dbReference type="InterPro" id="IPR013098">
    <property type="entry name" value="Ig_I-set"/>
</dbReference>
<dbReference type="InterPro" id="IPR003599">
    <property type="entry name" value="Ig_sub"/>
</dbReference>
<dbReference type="InterPro" id="IPR003598">
    <property type="entry name" value="Ig_sub2"/>
</dbReference>
<dbReference type="InterPro" id="IPR011009">
    <property type="entry name" value="Kinase-like_dom_sf"/>
</dbReference>
<dbReference type="InterPro" id="IPR027288">
    <property type="entry name" value="PGFRB"/>
</dbReference>
<dbReference type="InterPro" id="IPR000719">
    <property type="entry name" value="Prot_kinase_dom"/>
</dbReference>
<dbReference type="InterPro" id="IPR017441">
    <property type="entry name" value="Protein_kinase_ATP_BS"/>
</dbReference>
<dbReference type="InterPro" id="IPR050122">
    <property type="entry name" value="RTK"/>
</dbReference>
<dbReference type="InterPro" id="IPR001245">
    <property type="entry name" value="Ser-Thr/Tyr_kinase_cat_dom"/>
</dbReference>
<dbReference type="InterPro" id="IPR008266">
    <property type="entry name" value="Tyr_kinase_AS"/>
</dbReference>
<dbReference type="InterPro" id="IPR020635">
    <property type="entry name" value="Tyr_kinase_cat_dom"/>
</dbReference>
<dbReference type="PANTHER" id="PTHR24416:SF53">
    <property type="entry name" value="PLATELET-DERIVED GROWTH FACTOR RECEPTOR BETA"/>
    <property type="match status" value="1"/>
</dbReference>
<dbReference type="PANTHER" id="PTHR24416">
    <property type="entry name" value="TYROSINE-PROTEIN KINASE RECEPTOR"/>
    <property type="match status" value="1"/>
</dbReference>
<dbReference type="Pfam" id="PF07679">
    <property type="entry name" value="I-set"/>
    <property type="match status" value="1"/>
</dbReference>
<dbReference type="Pfam" id="PF13895">
    <property type="entry name" value="Ig_2"/>
    <property type="match status" value="1"/>
</dbReference>
<dbReference type="Pfam" id="PF25305">
    <property type="entry name" value="Ig_PDGFR_d4"/>
    <property type="match status" value="1"/>
</dbReference>
<dbReference type="Pfam" id="PF07714">
    <property type="entry name" value="PK_Tyr_Ser-Thr"/>
    <property type="match status" value="1"/>
</dbReference>
<dbReference type="PIRSF" id="PIRSF500948">
    <property type="entry name" value="Beta-PDGF_receptor"/>
    <property type="match status" value="1"/>
</dbReference>
<dbReference type="PIRSF" id="PIRSF000615">
    <property type="entry name" value="TyrPK_CSF1-R"/>
    <property type="match status" value="1"/>
</dbReference>
<dbReference type="PRINTS" id="PR01832">
    <property type="entry name" value="VEGFRECEPTOR"/>
</dbReference>
<dbReference type="SMART" id="SM00409">
    <property type="entry name" value="IG"/>
    <property type="match status" value="3"/>
</dbReference>
<dbReference type="SMART" id="SM00408">
    <property type="entry name" value="IGc2"/>
    <property type="match status" value="2"/>
</dbReference>
<dbReference type="SMART" id="SM00219">
    <property type="entry name" value="TyrKc"/>
    <property type="match status" value="1"/>
</dbReference>
<dbReference type="SUPFAM" id="SSF48726">
    <property type="entry name" value="Immunoglobulin"/>
    <property type="match status" value="3"/>
</dbReference>
<dbReference type="SUPFAM" id="SSF56112">
    <property type="entry name" value="Protein kinase-like (PK-like)"/>
    <property type="match status" value="1"/>
</dbReference>
<dbReference type="PROSITE" id="PS50835">
    <property type="entry name" value="IG_LIKE"/>
    <property type="match status" value="2"/>
</dbReference>
<dbReference type="PROSITE" id="PS00107">
    <property type="entry name" value="PROTEIN_KINASE_ATP"/>
    <property type="match status" value="1"/>
</dbReference>
<dbReference type="PROSITE" id="PS50011">
    <property type="entry name" value="PROTEIN_KINASE_DOM"/>
    <property type="match status" value="1"/>
</dbReference>
<dbReference type="PROSITE" id="PS00109">
    <property type="entry name" value="PROTEIN_KINASE_TYR"/>
    <property type="match status" value="1"/>
</dbReference>
<gene>
    <name type="primary">pdgfrb</name>
</gene>
<name>PGFRB_TAKRU</name>
<keyword id="KW-0067">ATP-binding</keyword>
<keyword id="KW-1003">Cell membrane</keyword>
<keyword id="KW-0145">Chemotaxis</keyword>
<keyword id="KW-0968">Cytoplasmic vesicle</keyword>
<keyword id="KW-0217">Developmental protein</keyword>
<keyword id="KW-1015">Disulfide bond</keyword>
<keyword id="KW-0325">Glycoprotein</keyword>
<keyword id="KW-0393">Immunoglobulin domain</keyword>
<keyword id="KW-0418">Kinase</keyword>
<keyword id="KW-0458">Lysosome</keyword>
<keyword id="KW-0472">Membrane</keyword>
<keyword id="KW-0547">Nucleotide-binding</keyword>
<keyword id="KW-0597">Phosphoprotein</keyword>
<keyword id="KW-0675">Receptor</keyword>
<keyword id="KW-1185">Reference proteome</keyword>
<keyword id="KW-0677">Repeat</keyword>
<keyword id="KW-0732">Signal</keyword>
<keyword id="KW-0808">Transferase</keyword>
<keyword id="KW-0812">Transmembrane</keyword>
<keyword id="KW-1133">Transmembrane helix</keyword>
<keyword id="KW-0829">Tyrosine-protein kinase</keyword>
<keyword id="KW-0832">Ubl conjugation</keyword>
<sequence>MLRASAMRAAVLHLTVALAALLSSCTTVSCLKIVPEEKQLILAEGSSLSLTCAGSSETTWDLKSDDVPFFQMKAESSDLNYKIVQSNSTASVLTLWHVDWKNTAVYQCREQLTGEIKEVAVFVPDRFSPQTLRFIESSHGMVTKTSGESTVPCVVTNPNITVTLYDKDTDLPVNGVYVPSEGFKAYLDYRTYVCRGELNGEVKESQAFNVYSIHVPEDIDAYVNASQTVLKQGEPLTVNCTVQGVELVLFSWDIPNRDIVKHKPETVVLSATTMRSCLVFPHATVAHSGTYVCHAHESTQDQKAFASVNITVLERGFVAVKSTRKQNITAELQENVELRVEIEAYPPPQIRWKKDGAPVRGDKTIIIRQEHEIRYVTILTLVRVRTEQKGLYTALITNEDDVKEVTFALEVQVLARIKDLTDHHLPGKKQLVTCVAEGVPTPTIQWYSCDSMLKCNNQTSLWQQLKADPELLSIHTSVTEARQTNQVRSQVTFFKPQHTTVRCETTNQEGLIDFRDVKLVSSSLFSQVVLLAVVLTLVPIIIMSIIILIAVWKKKPRYEIRWKVIESVSQDGHEYIYVDPIHLPYDLAWEMPRDNLVLGRTLGSGAFGRVVEATAHGLSHSQSSIKVAVKMLKATARRSETQALMSELKIMSHLGPHLNIVNLLAACTKHGPLYLVTEYCRYGDLVDYLHRNKHTFLQYYLDKNQDDGSLISGGSTPLSQRKGYVSFGSESDGGYMDMSKDEPAVYVPMQEQMDTIKYADIQPSPYESPYQQDLYQEQGGGRVDLVISDSPALTYDDLLGFSYQVAKGMEFLASKNCVHRDLAARNVLICEGKLVKICDFGLARDIMHDSNYISKGSTFLPLKWMAPESIFHNLYTTLSDVWSYGILLWEIFTLGGTPYPDLPMNELFYSPLKRGYRMAKPAHASDEVYEIMKRCWDETFEKRPDFSFLVHCVGDMLTDSYKKKYSQVNETFLKSDHPAVARTKPRLSSPFPIANPAFGSPSLVGLSDFPDPYNQNTRRFRNEAEVQEGVTSFNEYIIPIPDPKPEKS</sequence>
<reference key="1">
    <citation type="journal article" date="1996" name="Genome Res.">
        <title>Conserved linkage between the puffer fish (Fugu rubripes) and human genes for platelet-derived growth factor receptor and macrophage colony-stimulating factor receptor.</title>
        <authorList>
            <person name="How G.F."/>
            <person name="Venkatesh B."/>
            <person name="Brenner S."/>
        </authorList>
    </citation>
    <scope>NUCLEOTIDE SEQUENCE [GENOMIC DNA]</scope>
</reference>
<accession>P79749</accession>
<evidence type="ECO:0000250" key="1"/>
<evidence type="ECO:0000255" key="2"/>
<evidence type="ECO:0000255" key="3">
    <source>
        <dbReference type="PROSITE-ProRule" id="PRU00114"/>
    </source>
</evidence>
<evidence type="ECO:0000255" key="4">
    <source>
        <dbReference type="PROSITE-ProRule" id="PRU00159"/>
    </source>
</evidence>
<evidence type="ECO:0000255" key="5">
    <source>
        <dbReference type="PROSITE-ProRule" id="PRU10028"/>
    </source>
</evidence>
<organism>
    <name type="scientific">Takifugu rubripes</name>
    <name type="common">Japanese pufferfish</name>
    <name type="synonym">Fugu rubripes</name>
    <dbReference type="NCBI Taxonomy" id="31033"/>
    <lineage>
        <taxon>Eukaryota</taxon>
        <taxon>Metazoa</taxon>
        <taxon>Chordata</taxon>
        <taxon>Craniata</taxon>
        <taxon>Vertebrata</taxon>
        <taxon>Euteleostomi</taxon>
        <taxon>Actinopterygii</taxon>
        <taxon>Neopterygii</taxon>
        <taxon>Teleostei</taxon>
        <taxon>Neoteleostei</taxon>
        <taxon>Acanthomorphata</taxon>
        <taxon>Eupercaria</taxon>
        <taxon>Tetraodontiformes</taxon>
        <taxon>Tetradontoidea</taxon>
        <taxon>Tetraodontidae</taxon>
        <taxon>Takifugu</taxon>
    </lineage>
</organism>
<proteinExistence type="inferred from homology"/>